<reference key="1">
    <citation type="journal article" date="2001" name="Proc. Natl. Acad. Sci. U.S.A.">
        <title>Genome sequence of an industrial microorganism Streptomyces avermitilis: deducing the ability of producing secondary metabolites.</title>
        <authorList>
            <person name="Omura S."/>
            <person name="Ikeda H."/>
            <person name="Ishikawa J."/>
            <person name="Hanamoto A."/>
            <person name="Takahashi C."/>
            <person name="Shinose M."/>
            <person name="Takahashi Y."/>
            <person name="Horikawa H."/>
            <person name="Nakazawa H."/>
            <person name="Osonoe T."/>
            <person name="Kikuchi H."/>
            <person name="Shiba T."/>
            <person name="Sakaki Y."/>
            <person name="Hattori M."/>
        </authorList>
    </citation>
    <scope>NUCLEOTIDE SEQUENCE [LARGE SCALE GENOMIC DNA]</scope>
    <source>
        <strain>ATCC 31267 / DSM 46492 / JCM 5070 / NBRC 14893 / NCIMB 12804 / NRRL 8165 / MA-4680</strain>
    </source>
</reference>
<reference key="2">
    <citation type="journal article" date="2003" name="Nat. Biotechnol.">
        <title>Complete genome sequence and comparative analysis of the industrial microorganism Streptomyces avermitilis.</title>
        <authorList>
            <person name="Ikeda H."/>
            <person name="Ishikawa J."/>
            <person name="Hanamoto A."/>
            <person name="Shinose M."/>
            <person name="Kikuchi H."/>
            <person name="Shiba T."/>
            <person name="Sakaki Y."/>
            <person name="Hattori M."/>
            <person name="Omura S."/>
        </authorList>
    </citation>
    <scope>NUCLEOTIDE SEQUENCE [LARGE SCALE GENOMIC DNA]</scope>
    <source>
        <strain>ATCC 31267 / DSM 46492 / JCM 5070 / NBRC 14893 / NCIMB 12804 / NRRL 8165 / MA-4680</strain>
    </source>
</reference>
<comment type="function">
    <text evidence="1">Catalyzes the attachment of tryptophan to tRNA(Trp).</text>
</comment>
<comment type="catalytic activity">
    <reaction evidence="1">
        <text>tRNA(Trp) + L-tryptophan + ATP = L-tryptophyl-tRNA(Trp) + AMP + diphosphate + H(+)</text>
        <dbReference type="Rhea" id="RHEA:24080"/>
        <dbReference type="Rhea" id="RHEA-COMP:9671"/>
        <dbReference type="Rhea" id="RHEA-COMP:9705"/>
        <dbReference type="ChEBI" id="CHEBI:15378"/>
        <dbReference type="ChEBI" id="CHEBI:30616"/>
        <dbReference type="ChEBI" id="CHEBI:33019"/>
        <dbReference type="ChEBI" id="CHEBI:57912"/>
        <dbReference type="ChEBI" id="CHEBI:78442"/>
        <dbReference type="ChEBI" id="CHEBI:78535"/>
        <dbReference type="ChEBI" id="CHEBI:456215"/>
        <dbReference type="EC" id="6.1.1.2"/>
    </reaction>
</comment>
<comment type="subunit">
    <text evidence="1">Homodimer.</text>
</comment>
<comment type="subcellular location">
    <subcellularLocation>
        <location evidence="1">Cytoplasm</location>
    </subcellularLocation>
</comment>
<comment type="similarity">
    <text evidence="1">Belongs to the class-I aminoacyl-tRNA synthetase family.</text>
</comment>
<dbReference type="EC" id="6.1.1.2" evidence="1"/>
<dbReference type="EMBL" id="BA000030">
    <property type="protein sequence ID" value="BAC72437.1"/>
    <property type="molecule type" value="Genomic_DNA"/>
</dbReference>
<dbReference type="SMR" id="Q82E91"/>
<dbReference type="GeneID" id="41541805"/>
<dbReference type="KEGG" id="sma:SAVERM_4725"/>
<dbReference type="eggNOG" id="COG0180">
    <property type="taxonomic scope" value="Bacteria"/>
</dbReference>
<dbReference type="HOGENOM" id="CLU_029244_1_1_11"/>
<dbReference type="OrthoDB" id="9801042at2"/>
<dbReference type="Proteomes" id="UP000000428">
    <property type="component" value="Chromosome"/>
</dbReference>
<dbReference type="GO" id="GO:0005829">
    <property type="term" value="C:cytosol"/>
    <property type="evidence" value="ECO:0007669"/>
    <property type="project" value="TreeGrafter"/>
</dbReference>
<dbReference type="GO" id="GO:0005524">
    <property type="term" value="F:ATP binding"/>
    <property type="evidence" value="ECO:0007669"/>
    <property type="project" value="UniProtKB-UniRule"/>
</dbReference>
<dbReference type="GO" id="GO:0004830">
    <property type="term" value="F:tryptophan-tRNA ligase activity"/>
    <property type="evidence" value="ECO:0007669"/>
    <property type="project" value="UniProtKB-UniRule"/>
</dbReference>
<dbReference type="GO" id="GO:0006436">
    <property type="term" value="P:tryptophanyl-tRNA aminoacylation"/>
    <property type="evidence" value="ECO:0007669"/>
    <property type="project" value="UniProtKB-UniRule"/>
</dbReference>
<dbReference type="CDD" id="cd00806">
    <property type="entry name" value="TrpRS_core"/>
    <property type="match status" value="1"/>
</dbReference>
<dbReference type="FunFam" id="1.10.240.10:FF:000002">
    <property type="entry name" value="Tryptophan--tRNA ligase"/>
    <property type="match status" value="1"/>
</dbReference>
<dbReference type="FunFam" id="3.40.50.620:FF:000195">
    <property type="entry name" value="Tryptophan--tRNA ligase"/>
    <property type="match status" value="1"/>
</dbReference>
<dbReference type="Gene3D" id="3.40.50.620">
    <property type="entry name" value="HUPs"/>
    <property type="match status" value="1"/>
</dbReference>
<dbReference type="Gene3D" id="1.10.240.10">
    <property type="entry name" value="Tyrosyl-Transfer RNA Synthetase"/>
    <property type="match status" value="1"/>
</dbReference>
<dbReference type="HAMAP" id="MF_00140_B">
    <property type="entry name" value="Trp_tRNA_synth_B"/>
    <property type="match status" value="1"/>
</dbReference>
<dbReference type="InterPro" id="IPR001412">
    <property type="entry name" value="aa-tRNA-synth_I_CS"/>
</dbReference>
<dbReference type="InterPro" id="IPR002305">
    <property type="entry name" value="aa-tRNA-synth_Ic"/>
</dbReference>
<dbReference type="InterPro" id="IPR014729">
    <property type="entry name" value="Rossmann-like_a/b/a_fold"/>
</dbReference>
<dbReference type="InterPro" id="IPR002306">
    <property type="entry name" value="Trp-tRNA-ligase"/>
</dbReference>
<dbReference type="InterPro" id="IPR024109">
    <property type="entry name" value="Trp-tRNA-ligase_bac-type"/>
</dbReference>
<dbReference type="InterPro" id="IPR050203">
    <property type="entry name" value="Trp-tRNA_synthetase"/>
</dbReference>
<dbReference type="NCBIfam" id="TIGR00233">
    <property type="entry name" value="trpS"/>
    <property type="match status" value="1"/>
</dbReference>
<dbReference type="PANTHER" id="PTHR43766">
    <property type="entry name" value="TRYPTOPHAN--TRNA LIGASE, MITOCHONDRIAL"/>
    <property type="match status" value="1"/>
</dbReference>
<dbReference type="PANTHER" id="PTHR43766:SF1">
    <property type="entry name" value="TRYPTOPHAN--TRNA LIGASE, MITOCHONDRIAL"/>
    <property type="match status" value="1"/>
</dbReference>
<dbReference type="Pfam" id="PF00579">
    <property type="entry name" value="tRNA-synt_1b"/>
    <property type="match status" value="1"/>
</dbReference>
<dbReference type="PRINTS" id="PR01039">
    <property type="entry name" value="TRNASYNTHTRP"/>
</dbReference>
<dbReference type="SUPFAM" id="SSF52374">
    <property type="entry name" value="Nucleotidylyl transferase"/>
    <property type="match status" value="1"/>
</dbReference>
<dbReference type="PROSITE" id="PS00178">
    <property type="entry name" value="AA_TRNA_LIGASE_I"/>
    <property type="match status" value="1"/>
</dbReference>
<proteinExistence type="inferred from homology"/>
<feature type="chain" id="PRO_0000136686" description="Tryptophan--tRNA ligase 1">
    <location>
        <begin position="1"/>
        <end position="331"/>
    </location>
</feature>
<feature type="short sequence motif" description="'HIGH' region" evidence="1">
    <location>
        <begin position="10"/>
        <end position="18"/>
    </location>
</feature>
<feature type="short sequence motif" description="'KMSKS' region" evidence="1">
    <location>
        <begin position="197"/>
        <end position="201"/>
    </location>
</feature>
<feature type="binding site" evidence="1">
    <location>
        <begin position="9"/>
        <end position="11"/>
    </location>
    <ligand>
        <name>ATP</name>
        <dbReference type="ChEBI" id="CHEBI:30616"/>
    </ligand>
</feature>
<feature type="binding site" evidence="1">
    <location>
        <begin position="17"/>
        <end position="18"/>
    </location>
    <ligand>
        <name>ATP</name>
        <dbReference type="ChEBI" id="CHEBI:30616"/>
    </ligand>
</feature>
<feature type="binding site" evidence="1">
    <location>
        <position position="137"/>
    </location>
    <ligand>
        <name>L-tryptophan</name>
        <dbReference type="ChEBI" id="CHEBI:57912"/>
    </ligand>
</feature>
<feature type="binding site" evidence="1">
    <location>
        <begin position="149"/>
        <end position="151"/>
    </location>
    <ligand>
        <name>ATP</name>
        <dbReference type="ChEBI" id="CHEBI:30616"/>
    </ligand>
</feature>
<feature type="binding site" evidence="1">
    <location>
        <position position="188"/>
    </location>
    <ligand>
        <name>ATP</name>
        <dbReference type="ChEBI" id="CHEBI:30616"/>
    </ligand>
</feature>
<feature type="binding site" evidence="1">
    <location>
        <begin position="197"/>
        <end position="201"/>
    </location>
    <ligand>
        <name>ATP</name>
        <dbReference type="ChEBI" id="CHEBI:30616"/>
    </ligand>
</feature>
<keyword id="KW-0030">Aminoacyl-tRNA synthetase</keyword>
<keyword id="KW-0067">ATP-binding</keyword>
<keyword id="KW-0963">Cytoplasm</keyword>
<keyword id="KW-0436">Ligase</keyword>
<keyword id="KW-0547">Nucleotide-binding</keyword>
<keyword id="KW-0648">Protein biosynthesis</keyword>
<keyword id="KW-1185">Reference proteome</keyword>
<name>SYW1_STRAW</name>
<accession>Q82E91</accession>
<evidence type="ECO:0000255" key="1">
    <source>
        <dbReference type="HAMAP-Rule" id="MF_00140"/>
    </source>
</evidence>
<organism>
    <name type="scientific">Streptomyces avermitilis (strain ATCC 31267 / DSM 46492 / JCM 5070 / NBRC 14893 / NCIMB 12804 / NRRL 8165 / MA-4680)</name>
    <dbReference type="NCBI Taxonomy" id="227882"/>
    <lineage>
        <taxon>Bacteria</taxon>
        <taxon>Bacillati</taxon>
        <taxon>Actinomycetota</taxon>
        <taxon>Actinomycetes</taxon>
        <taxon>Kitasatosporales</taxon>
        <taxon>Streptomycetaceae</taxon>
        <taxon>Streptomyces</taxon>
    </lineage>
</organism>
<gene>
    <name evidence="1" type="primary">trpS1</name>
    <name type="ordered locus">SAV_4725</name>
</gene>
<protein>
    <recommendedName>
        <fullName evidence="1">Tryptophan--tRNA ligase 1</fullName>
        <ecNumber evidence="1">6.1.1.2</ecNumber>
    </recommendedName>
    <alternativeName>
        <fullName evidence="1">Tryptophanyl-tRNA synthetase 1</fullName>
        <shortName evidence="1">TrpRS 1</shortName>
    </alternativeName>
</protein>
<sequence>MKRIFSGVKPTGHLTLGNYLGAVRRWVDVDQHGADALFCVVDLHALTVDHDPARVRRLSRQAATLMLAAGLDPELCTVFVQSHVDEHARLSYLMECVATDGEMRRMIQYREKAAREQQRGGSVRLSLLTYPVLMAADILAYGTDEVPVGDDQTQHVELTRDLAVRFNQRYGHTFVVPRATRPEVAARVMNLQEPTSKMGKSDDVGPGIVYLLDEPEAVRKKVMRAVTDSGRDVVYDRESRPGVSNLLEILAACEGGSPEALSGAYASYGALKKDTAEAVVELLRPLQERHKALCAEPGYVEGVLRDGARRARELARPRVDAAYRAIGLLEA</sequence>